<dbReference type="EC" id="1.4.3.5" evidence="1"/>
<dbReference type="EMBL" id="CP000926">
    <property type="protein sequence ID" value="ABZ00175.1"/>
    <property type="molecule type" value="Genomic_DNA"/>
</dbReference>
<dbReference type="RefSeq" id="WP_012273845.1">
    <property type="nucleotide sequence ID" value="NC_010322.1"/>
</dbReference>
<dbReference type="SMR" id="B0KUA9"/>
<dbReference type="KEGG" id="ppg:PputGB1_4286"/>
<dbReference type="eggNOG" id="COG0259">
    <property type="taxonomic scope" value="Bacteria"/>
</dbReference>
<dbReference type="HOGENOM" id="CLU_032263_2_2_6"/>
<dbReference type="UniPathway" id="UPA01068">
    <property type="reaction ID" value="UER00304"/>
</dbReference>
<dbReference type="UniPathway" id="UPA01068">
    <property type="reaction ID" value="UER00305"/>
</dbReference>
<dbReference type="Proteomes" id="UP000002157">
    <property type="component" value="Chromosome"/>
</dbReference>
<dbReference type="GO" id="GO:0010181">
    <property type="term" value="F:FMN binding"/>
    <property type="evidence" value="ECO:0007669"/>
    <property type="project" value="UniProtKB-UniRule"/>
</dbReference>
<dbReference type="GO" id="GO:0004733">
    <property type="term" value="F:pyridoxamine phosphate oxidase activity"/>
    <property type="evidence" value="ECO:0007669"/>
    <property type="project" value="UniProtKB-UniRule"/>
</dbReference>
<dbReference type="GO" id="GO:0008615">
    <property type="term" value="P:pyridoxine biosynthetic process"/>
    <property type="evidence" value="ECO:0007669"/>
    <property type="project" value="UniProtKB-KW"/>
</dbReference>
<dbReference type="FunFam" id="2.30.110.10:FF:000011">
    <property type="entry name" value="Chromosome 7, whole genome shotgun sequence"/>
    <property type="match status" value="1"/>
</dbReference>
<dbReference type="Gene3D" id="2.30.110.10">
    <property type="entry name" value="Electron Transport, Fmn-binding Protein, Chain A"/>
    <property type="match status" value="1"/>
</dbReference>
<dbReference type="HAMAP" id="MF_01629">
    <property type="entry name" value="PdxH"/>
    <property type="match status" value="1"/>
</dbReference>
<dbReference type="InterPro" id="IPR000659">
    <property type="entry name" value="Pyridox_Oxase"/>
</dbReference>
<dbReference type="InterPro" id="IPR019740">
    <property type="entry name" value="Pyridox_Oxase_CS"/>
</dbReference>
<dbReference type="InterPro" id="IPR011576">
    <property type="entry name" value="Pyridox_Oxase_N"/>
</dbReference>
<dbReference type="InterPro" id="IPR019576">
    <property type="entry name" value="Pyridoxamine_oxidase_dimer_C"/>
</dbReference>
<dbReference type="InterPro" id="IPR012349">
    <property type="entry name" value="Split_barrel_FMN-bd"/>
</dbReference>
<dbReference type="NCBIfam" id="TIGR00558">
    <property type="entry name" value="pdxH"/>
    <property type="match status" value="1"/>
</dbReference>
<dbReference type="NCBIfam" id="NF004231">
    <property type="entry name" value="PRK05679.1"/>
    <property type="match status" value="1"/>
</dbReference>
<dbReference type="PANTHER" id="PTHR10851:SF0">
    <property type="entry name" value="PYRIDOXINE-5'-PHOSPHATE OXIDASE"/>
    <property type="match status" value="1"/>
</dbReference>
<dbReference type="PANTHER" id="PTHR10851">
    <property type="entry name" value="PYRIDOXINE-5-PHOSPHATE OXIDASE"/>
    <property type="match status" value="1"/>
</dbReference>
<dbReference type="Pfam" id="PF10590">
    <property type="entry name" value="PNP_phzG_C"/>
    <property type="match status" value="1"/>
</dbReference>
<dbReference type="Pfam" id="PF01243">
    <property type="entry name" value="PNPOx_N"/>
    <property type="match status" value="1"/>
</dbReference>
<dbReference type="PIRSF" id="PIRSF000190">
    <property type="entry name" value="Pyd_amn-ph_oxd"/>
    <property type="match status" value="1"/>
</dbReference>
<dbReference type="SUPFAM" id="SSF50475">
    <property type="entry name" value="FMN-binding split barrel"/>
    <property type="match status" value="1"/>
</dbReference>
<dbReference type="PROSITE" id="PS01064">
    <property type="entry name" value="PYRIDOX_OXIDASE"/>
    <property type="match status" value="1"/>
</dbReference>
<organism>
    <name type="scientific">Pseudomonas putida (strain GB-1)</name>
    <dbReference type="NCBI Taxonomy" id="76869"/>
    <lineage>
        <taxon>Bacteria</taxon>
        <taxon>Pseudomonadati</taxon>
        <taxon>Pseudomonadota</taxon>
        <taxon>Gammaproteobacteria</taxon>
        <taxon>Pseudomonadales</taxon>
        <taxon>Pseudomonadaceae</taxon>
        <taxon>Pseudomonas</taxon>
    </lineage>
</organism>
<evidence type="ECO:0000255" key="1">
    <source>
        <dbReference type="HAMAP-Rule" id="MF_01629"/>
    </source>
</evidence>
<reference key="1">
    <citation type="submission" date="2008-01" db="EMBL/GenBank/DDBJ databases">
        <title>Complete sequence of Pseudomonas putida GB-1.</title>
        <authorList>
            <consortium name="US DOE Joint Genome Institute"/>
            <person name="Copeland A."/>
            <person name="Lucas S."/>
            <person name="Lapidus A."/>
            <person name="Barry K."/>
            <person name="Glavina del Rio T."/>
            <person name="Dalin E."/>
            <person name="Tice H."/>
            <person name="Pitluck S."/>
            <person name="Bruce D."/>
            <person name="Goodwin L."/>
            <person name="Chertkov O."/>
            <person name="Brettin T."/>
            <person name="Detter J.C."/>
            <person name="Han C."/>
            <person name="Kuske C.R."/>
            <person name="Schmutz J."/>
            <person name="Larimer F."/>
            <person name="Land M."/>
            <person name="Hauser L."/>
            <person name="Kyrpides N."/>
            <person name="Kim E."/>
            <person name="McCarthy J.K."/>
            <person name="Richardson P."/>
        </authorList>
    </citation>
    <scope>NUCLEOTIDE SEQUENCE [LARGE SCALE GENOMIC DNA]</scope>
    <source>
        <strain>GB-1</strain>
    </source>
</reference>
<keyword id="KW-0285">Flavoprotein</keyword>
<keyword id="KW-0288">FMN</keyword>
<keyword id="KW-0560">Oxidoreductase</keyword>
<keyword id="KW-0664">Pyridoxine biosynthesis</keyword>
<feature type="chain" id="PRO_1000088116" description="Pyridoxine/pyridoxamine 5'-phosphate oxidase">
    <location>
        <begin position="1"/>
        <end position="215"/>
    </location>
</feature>
<feature type="binding site" evidence="1">
    <location>
        <begin position="9"/>
        <end position="12"/>
    </location>
    <ligand>
        <name>substrate</name>
    </ligand>
</feature>
<feature type="binding site" evidence="1">
    <location>
        <begin position="64"/>
        <end position="69"/>
    </location>
    <ligand>
        <name>FMN</name>
        <dbReference type="ChEBI" id="CHEBI:58210"/>
    </ligand>
</feature>
<feature type="binding site" evidence="1">
    <location>
        <position position="69"/>
    </location>
    <ligand>
        <name>substrate</name>
    </ligand>
</feature>
<feature type="binding site" evidence="1">
    <location>
        <begin position="79"/>
        <end position="80"/>
    </location>
    <ligand>
        <name>FMN</name>
        <dbReference type="ChEBI" id="CHEBI:58210"/>
    </ligand>
</feature>
<feature type="binding site" evidence="1">
    <location>
        <position position="86"/>
    </location>
    <ligand>
        <name>FMN</name>
        <dbReference type="ChEBI" id="CHEBI:58210"/>
    </ligand>
</feature>
<feature type="binding site" evidence="1">
    <location>
        <position position="108"/>
    </location>
    <ligand>
        <name>FMN</name>
        <dbReference type="ChEBI" id="CHEBI:58210"/>
    </ligand>
</feature>
<feature type="binding site" evidence="1">
    <location>
        <position position="126"/>
    </location>
    <ligand>
        <name>substrate</name>
    </ligand>
</feature>
<feature type="binding site" evidence="1">
    <location>
        <position position="130"/>
    </location>
    <ligand>
        <name>substrate</name>
    </ligand>
</feature>
<feature type="binding site" evidence="1">
    <location>
        <position position="134"/>
    </location>
    <ligand>
        <name>substrate</name>
    </ligand>
</feature>
<feature type="binding site" evidence="1">
    <location>
        <begin position="143"/>
        <end position="144"/>
    </location>
    <ligand>
        <name>FMN</name>
        <dbReference type="ChEBI" id="CHEBI:58210"/>
    </ligand>
</feature>
<feature type="binding site" evidence="1">
    <location>
        <position position="188"/>
    </location>
    <ligand>
        <name>FMN</name>
        <dbReference type="ChEBI" id="CHEBI:58210"/>
    </ligand>
</feature>
<feature type="binding site" evidence="1">
    <location>
        <begin position="194"/>
        <end position="196"/>
    </location>
    <ligand>
        <name>substrate</name>
    </ligand>
</feature>
<feature type="binding site" evidence="1">
    <location>
        <position position="198"/>
    </location>
    <ligand>
        <name>FMN</name>
        <dbReference type="ChEBI" id="CHEBI:58210"/>
    </ligand>
</feature>
<proteinExistence type="inferred from homology"/>
<comment type="function">
    <text evidence="1">Catalyzes the oxidation of either pyridoxine 5'-phosphate (PNP) or pyridoxamine 5'-phosphate (PMP) into pyridoxal 5'-phosphate (PLP).</text>
</comment>
<comment type="catalytic activity">
    <reaction evidence="1">
        <text>pyridoxamine 5'-phosphate + O2 + H2O = pyridoxal 5'-phosphate + H2O2 + NH4(+)</text>
        <dbReference type="Rhea" id="RHEA:15817"/>
        <dbReference type="ChEBI" id="CHEBI:15377"/>
        <dbReference type="ChEBI" id="CHEBI:15379"/>
        <dbReference type="ChEBI" id="CHEBI:16240"/>
        <dbReference type="ChEBI" id="CHEBI:28938"/>
        <dbReference type="ChEBI" id="CHEBI:58451"/>
        <dbReference type="ChEBI" id="CHEBI:597326"/>
        <dbReference type="EC" id="1.4.3.5"/>
    </reaction>
</comment>
<comment type="catalytic activity">
    <reaction evidence="1">
        <text>pyridoxine 5'-phosphate + O2 = pyridoxal 5'-phosphate + H2O2</text>
        <dbReference type="Rhea" id="RHEA:15149"/>
        <dbReference type="ChEBI" id="CHEBI:15379"/>
        <dbReference type="ChEBI" id="CHEBI:16240"/>
        <dbReference type="ChEBI" id="CHEBI:58589"/>
        <dbReference type="ChEBI" id="CHEBI:597326"/>
        <dbReference type="EC" id="1.4.3.5"/>
    </reaction>
</comment>
<comment type="cofactor">
    <cofactor evidence="1">
        <name>FMN</name>
        <dbReference type="ChEBI" id="CHEBI:58210"/>
    </cofactor>
    <text evidence="1">Binds 1 FMN per subunit.</text>
</comment>
<comment type="pathway">
    <text evidence="1">Cofactor metabolism; pyridoxal 5'-phosphate salvage; pyridoxal 5'-phosphate from pyridoxamine 5'-phosphate: step 1/1.</text>
</comment>
<comment type="pathway">
    <text evidence="1">Cofactor metabolism; pyridoxal 5'-phosphate salvage; pyridoxal 5'-phosphate from pyridoxine 5'-phosphate: step 1/1.</text>
</comment>
<comment type="subunit">
    <text evidence="1">Homodimer.</text>
</comment>
<comment type="similarity">
    <text evidence="1">Belongs to the pyridoxamine 5'-phosphate oxidase family.</text>
</comment>
<name>PDXH_PSEPG</name>
<sequence>MTQSLADMRRDYTRDGLAEAQAPGEPFVLFHQWFADAVKTEQAPVEANAMTLATVDGEGRPHCRVLLLKGLDEQGFTFFTNYESAKGQQLQANPFAAMTFFWPALERQVRIEGRVEKVSAQESDAYYQVRPLGSRLGAWASPQSRVIAGREELEGLVKATEARFSDTQPHCPEHWGGYRLLPERIEFWQGRASRLHDRLNYRFVNGQWQRERLAP</sequence>
<accession>B0KUA9</accession>
<protein>
    <recommendedName>
        <fullName evidence="1">Pyridoxine/pyridoxamine 5'-phosphate oxidase</fullName>
        <ecNumber evidence="1">1.4.3.5</ecNumber>
    </recommendedName>
    <alternativeName>
        <fullName evidence="1">PNP/PMP oxidase</fullName>
        <shortName evidence="1">PNPOx</shortName>
    </alternativeName>
    <alternativeName>
        <fullName evidence="1">Pyridoxal 5'-phosphate synthase</fullName>
    </alternativeName>
</protein>
<gene>
    <name evidence="1" type="primary">pdxH</name>
    <name type="ordered locus">PputGB1_4286</name>
</gene>